<protein>
    <recommendedName>
        <fullName evidence="1">UPF0235 protein Mpop_2087</fullName>
    </recommendedName>
</protein>
<comment type="similarity">
    <text evidence="1">Belongs to the UPF0235 family.</text>
</comment>
<dbReference type="EMBL" id="CP001029">
    <property type="protein sequence ID" value="ACB80249.1"/>
    <property type="molecule type" value="Genomic_DNA"/>
</dbReference>
<dbReference type="RefSeq" id="WP_012453992.1">
    <property type="nucleotide sequence ID" value="NC_010725.1"/>
</dbReference>
<dbReference type="SMR" id="B1ZLG8"/>
<dbReference type="KEGG" id="mpo:Mpop_2087"/>
<dbReference type="eggNOG" id="COG1872">
    <property type="taxonomic scope" value="Bacteria"/>
</dbReference>
<dbReference type="HOGENOM" id="CLU_130694_3_0_5"/>
<dbReference type="OrthoDB" id="9801972at2"/>
<dbReference type="Proteomes" id="UP000007136">
    <property type="component" value="Chromosome"/>
</dbReference>
<dbReference type="GO" id="GO:0005737">
    <property type="term" value="C:cytoplasm"/>
    <property type="evidence" value="ECO:0007669"/>
    <property type="project" value="TreeGrafter"/>
</dbReference>
<dbReference type="Gene3D" id="3.30.1200.10">
    <property type="entry name" value="YggU-like"/>
    <property type="match status" value="1"/>
</dbReference>
<dbReference type="HAMAP" id="MF_00634">
    <property type="entry name" value="UPF0235"/>
    <property type="match status" value="1"/>
</dbReference>
<dbReference type="InterPro" id="IPR003746">
    <property type="entry name" value="DUF167"/>
</dbReference>
<dbReference type="InterPro" id="IPR036591">
    <property type="entry name" value="YggU-like_sf"/>
</dbReference>
<dbReference type="NCBIfam" id="TIGR00251">
    <property type="entry name" value="DUF167 family protein"/>
    <property type="match status" value="1"/>
</dbReference>
<dbReference type="PANTHER" id="PTHR13420">
    <property type="entry name" value="UPF0235 PROTEIN C15ORF40"/>
    <property type="match status" value="1"/>
</dbReference>
<dbReference type="PANTHER" id="PTHR13420:SF7">
    <property type="entry name" value="UPF0235 PROTEIN C15ORF40"/>
    <property type="match status" value="1"/>
</dbReference>
<dbReference type="Pfam" id="PF02594">
    <property type="entry name" value="DUF167"/>
    <property type="match status" value="1"/>
</dbReference>
<dbReference type="SMART" id="SM01152">
    <property type="entry name" value="DUF167"/>
    <property type="match status" value="1"/>
</dbReference>
<dbReference type="SUPFAM" id="SSF69786">
    <property type="entry name" value="YggU-like"/>
    <property type="match status" value="1"/>
</dbReference>
<evidence type="ECO:0000255" key="1">
    <source>
        <dbReference type="HAMAP-Rule" id="MF_00634"/>
    </source>
</evidence>
<gene>
    <name type="ordered locus">Mpop_2087</name>
</gene>
<feature type="chain" id="PRO_1000212351" description="UPF0235 protein Mpop_2087">
    <location>
        <begin position="1"/>
        <end position="110"/>
    </location>
</feature>
<reference key="1">
    <citation type="submission" date="2008-04" db="EMBL/GenBank/DDBJ databases">
        <title>Complete sequence of chromosome of Methylobacterium populi BJ001.</title>
        <authorList>
            <consortium name="US DOE Joint Genome Institute"/>
            <person name="Copeland A."/>
            <person name="Lucas S."/>
            <person name="Lapidus A."/>
            <person name="Glavina del Rio T."/>
            <person name="Dalin E."/>
            <person name="Tice H."/>
            <person name="Bruce D."/>
            <person name="Goodwin L."/>
            <person name="Pitluck S."/>
            <person name="Chertkov O."/>
            <person name="Brettin T."/>
            <person name="Detter J.C."/>
            <person name="Han C."/>
            <person name="Kuske C.R."/>
            <person name="Schmutz J."/>
            <person name="Larimer F."/>
            <person name="Land M."/>
            <person name="Hauser L."/>
            <person name="Kyrpides N."/>
            <person name="Mikhailova N."/>
            <person name="Marx C."/>
            <person name="Richardson P."/>
        </authorList>
    </citation>
    <scope>NUCLEOTIDE SEQUENCE [LARGE SCALE GENOMIC DNA]</scope>
    <source>
        <strain>ATCC BAA-705 / NCIMB 13946 / BJ001</strain>
    </source>
</reference>
<name>Y2087_METPB</name>
<proteinExistence type="inferred from homology"/>
<organism>
    <name type="scientific">Methylorubrum populi (strain ATCC BAA-705 / NCIMB 13946 / BJ001)</name>
    <name type="common">Methylobacterium populi</name>
    <dbReference type="NCBI Taxonomy" id="441620"/>
    <lineage>
        <taxon>Bacteria</taxon>
        <taxon>Pseudomonadati</taxon>
        <taxon>Pseudomonadota</taxon>
        <taxon>Alphaproteobacteria</taxon>
        <taxon>Hyphomicrobiales</taxon>
        <taxon>Methylobacteriaceae</taxon>
        <taxon>Methylorubrum</taxon>
    </lineage>
</organism>
<accession>B1ZLG8</accession>
<sequence length="110" mass="11294">MTQCPFTPCADGLILAVRLTPRAGRTGLDGVRTEPDGRPILCLRVAAPPVEGAANAALTAFVAKSLGLRKSEVTLVSGETARTKRLHLSGDPQALAARATAWFGGDGPGS</sequence>